<name>GLK_RHIME</name>
<sequence>MPNASEHSFPFPILIGDIGGTNARFALLTDAYGEPKQLAPIRTGDFATIEEAMQKGILDKTSVQPRSAILAVAGPIKGDEIPLTNAGWVIRPKDMLAGLGLEDVLVINDFEAQALAIAAPADQDVVQIGGGAVRPFHSRVVLGPGTGLGVAGLVYAQHTWIPVPGEGGHVDIGPRTERDFRIWPFLEPIEGRMAGEQILCGRGIMNLYRAVCAANGEEAVLADQAAVTTSALSGADAAAVETVSLFATYLGRVAGDMALIFMARGGVFLAGGISQKILPALTKPEFRAAFEDKAPHSALMRTIPTFAVIHPMAALSGLAAFARTPRDFGVAMEGRRWRR</sequence>
<evidence type="ECO:0000255" key="1">
    <source>
        <dbReference type="HAMAP-Rule" id="MF_00524"/>
    </source>
</evidence>
<reference key="1">
    <citation type="journal article" date="2001" name="Proc. Natl. Acad. Sci. U.S.A.">
        <title>Analysis of the chromosome sequence of the legume symbiont Sinorhizobium meliloti strain 1021.</title>
        <authorList>
            <person name="Capela D."/>
            <person name="Barloy-Hubler F."/>
            <person name="Gouzy J."/>
            <person name="Bothe G."/>
            <person name="Ampe F."/>
            <person name="Batut J."/>
            <person name="Boistard P."/>
            <person name="Becker A."/>
            <person name="Boutry M."/>
            <person name="Cadieu E."/>
            <person name="Dreano S."/>
            <person name="Gloux S."/>
            <person name="Godrie T."/>
            <person name="Goffeau A."/>
            <person name="Kahn D."/>
            <person name="Kiss E."/>
            <person name="Lelaure V."/>
            <person name="Masuy D."/>
            <person name="Pohl T."/>
            <person name="Portetelle D."/>
            <person name="Puehler A."/>
            <person name="Purnelle B."/>
            <person name="Ramsperger U."/>
            <person name="Renard C."/>
            <person name="Thebault P."/>
            <person name="Vandenbol M."/>
            <person name="Weidner S."/>
            <person name="Galibert F."/>
        </authorList>
    </citation>
    <scope>NUCLEOTIDE SEQUENCE [LARGE SCALE GENOMIC DNA]</scope>
    <source>
        <strain>1021</strain>
    </source>
</reference>
<reference key="2">
    <citation type="journal article" date="2001" name="Science">
        <title>The composite genome of the legume symbiont Sinorhizobium meliloti.</title>
        <authorList>
            <person name="Galibert F."/>
            <person name="Finan T.M."/>
            <person name="Long S.R."/>
            <person name="Puehler A."/>
            <person name="Abola P."/>
            <person name="Ampe F."/>
            <person name="Barloy-Hubler F."/>
            <person name="Barnett M.J."/>
            <person name="Becker A."/>
            <person name="Boistard P."/>
            <person name="Bothe G."/>
            <person name="Boutry M."/>
            <person name="Bowser L."/>
            <person name="Buhrmester J."/>
            <person name="Cadieu E."/>
            <person name="Capela D."/>
            <person name="Chain P."/>
            <person name="Cowie A."/>
            <person name="Davis R.W."/>
            <person name="Dreano S."/>
            <person name="Federspiel N.A."/>
            <person name="Fisher R.F."/>
            <person name="Gloux S."/>
            <person name="Godrie T."/>
            <person name="Goffeau A."/>
            <person name="Golding B."/>
            <person name="Gouzy J."/>
            <person name="Gurjal M."/>
            <person name="Hernandez-Lucas I."/>
            <person name="Hong A."/>
            <person name="Huizar L."/>
            <person name="Hyman R.W."/>
            <person name="Jones T."/>
            <person name="Kahn D."/>
            <person name="Kahn M.L."/>
            <person name="Kalman S."/>
            <person name="Keating D.H."/>
            <person name="Kiss E."/>
            <person name="Komp C."/>
            <person name="Lelaure V."/>
            <person name="Masuy D."/>
            <person name="Palm C."/>
            <person name="Peck M.C."/>
            <person name="Pohl T.M."/>
            <person name="Portetelle D."/>
            <person name="Purnelle B."/>
            <person name="Ramsperger U."/>
            <person name="Surzycki R."/>
            <person name="Thebault P."/>
            <person name="Vandenbol M."/>
            <person name="Vorhoelter F.J."/>
            <person name="Weidner S."/>
            <person name="Wells D.H."/>
            <person name="Wong K."/>
            <person name="Yeh K.-C."/>
            <person name="Batut J."/>
        </authorList>
    </citation>
    <scope>NUCLEOTIDE SEQUENCE [LARGE SCALE GENOMIC DNA]</scope>
    <source>
        <strain>1021</strain>
    </source>
</reference>
<comment type="catalytic activity">
    <reaction evidence="1">
        <text>D-glucose + ATP = D-glucose 6-phosphate + ADP + H(+)</text>
        <dbReference type="Rhea" id="RHEA:17825"/>
        <dbReference type="ChEBI" id="CHEBI:4167"/>
        <dbReference type="ChEBI" id="CHEBI:15378"/>
        <dbReference type="ChEBI" id="CHEBI:30616"/>
        <dbReference type="ChEBI" id="CHEBI:61548"/>
        <dbReference type="ChEBI" id="CHEBI:456216"/>
        <dbReference type="EC" id="2.7.1.2"/>
    </reaction>
</comment>
<comment type="subcellular location">
    <subcellularLocation>
        <location evidence="1">Cytoplasm</location>
    </subcellularLocation>
</comment>
<comment type="similarity">
    <text evidence="1">Belongs to the bacterial glucokinase family.</text>
</comment>
<organism>
    <name type="scientific">Rhizobium meliloti (strain 1021)</name>
    <name type="common">Ensifer meliloti</name>
    <name type="synonym">Sinorhizobium meliloti</name>
    <dbReference type="NCBI Taxonomy" id="266834"/>
    <lineage>
        <taxon>Bacteria</taxon>
        <taxon>Pseudomonadati</taxon>
        <taxon>Pseudomonadota</taxon>
        <taxon>Alphaproteobacteria</taxon>
        <taxon>Hyphomicrobiales</taxon>
        <taxon>Rhizobiaceae</taxon>
        <taxon>Sinorhizobium/Ensifer group</taxon>
        <taxon>Sinorhizobium</taxon>
    </lineage>
</organism>
<feature type="chain" id="PRO_0000215136" description="Glucokinase">
    <location>
        <begin position="1"/>
        <end position="339"/>
    </location>
</feature>
<feature type="binding site" evidence="1">
    <location>
        <begin position="16"/>
        <end position="21"/>
    </location>
    <ligand>
        <name>ATP</name>
        <dbReference type="ChEBI" id="CHEBI:30616"/>
    </ligand>
</feature>
<dbReference type="EC" id="2.7.1.2" evidence="1"/>
<dbReference type="EMBL" id="AL591688">
    <property type="protein sequence ID" value="CAC41546.1"/>
    <property type="molecule type" value="Genomic_DNA"/>
</dbReference>
<dbReference type="RefSeq" id="NP_384265.1">
    <property type="nucleotide sequence ID" value="NC_003047.1"/>
</dbReference>
<dbReference type="RefSeq" id="WP_010968393.1">
    <property type="nucleotide sequence ID" value="NC_003047.1"/>
</dbReference>
<dbReference type="SMR" id="Q92T27"/>
<dbReference type="EnsemblBacteria" id="CAC41546">
    <property type="protein sequence ID" value="CAC41546"/>
    <property type="gene ID" value="SMc02835"/>
</dbReference>
<dbReference type="KEGG" id="sme:SMc02835"/>
<dbReference type="PATRIC" id="fig|266834.11.peg.1520"/>
<dbReference type="eggNOG" id="COG0837">
    <property type="taxonomic scope" value="Bacteria"/>
</dbReference>
<dbReference type="HOGENOM" id="CLU_042582_1_0_5"/>
<dbReference type="OrthoDB" id="9800595at2"/>
<dbReference type="Proteomes" id="UP000001976">
    <property type="component" value="Chromosome"/>
</dbReference>
<dbReference type="GO" id="GO:0005829">
    <property type="term" value="C:cytosol"/>
    <property type="evidence" value="ECO:0007669"/>
    <property type="project" value="TreeGrafter"/>
</dbReference>
<dbReference type="GO" id="GO:0005524">
    <property type="term" value="F:ATP binding"/>
    <property type="evidence" value="ECO:0007669"/>
    <property type="project" value="UniProtKB-UniRule"/>
</dbReference>
<dbReference type="GO" id="GO:0005536">
    <property type="term" value="F:D-glucose binding"/>
    <property type="evidence" value="ECO:0007669"/>
    <property type="project" value="InterPro"/>
</dbReference>
<dbReference type="GO" id="GO:0004340">
    <property type="term" value="F:glucokinase activity"/>
    <property type="evidence" value="ECO:0007669"/>
    <property type="project" value="UniProtKB-UniRule"/>
</dbReference>
<dbReference type="GO" id="GO:0006096">
    <property type="term" value="P:glycolytic process"/>
    <property type="evidence" value="ECO:0007669"/>
    <property type="project" value="UniProtKB-UniRule"/>
</dbReference>
<dbReference type="CDD" id="cd24008">
    <property type="entry name" value="ASKHA_NBD_GLK"/>
    <property type="match status" value="1"/>
</dbReference>
<dbReference type="Gene3D" id="3.30.420.40">
    <property type="match status" value="1"/>
</dbReference>
<dbReference type="Gene3D" id="3.40.367.20">
    <property type="match status" value="1"/>
</dbReference>
<dbReference type="HAMAP" id="MF_00524">
    <property type="entry name" value="Glucokinase"/>
    <property type="match status" value="1"/>
</dbReference>
<dbReference type="InterPro" id="IPR043129">
    <property type="entry name" value="ATPase_NBD"/>
</dbReference>
<dbReference type="InterPro" id="IPR050201">
    <property type="entry name" value="Bacterial_glucokinase"/>
</dbReference>
<dbReference type="InterPro" id="IPR003836">
    <property type="entry name" value="Glucokinase"/>
</dbReference>
<dbReference type="NCBIfam" id="TIGR00749">
    <property type="entry name" value="glk"/>
    <property type="match status" value="1"/>
</dbReference>
<dbReference type="NCBIfam" id="NF001417">
    <property type="entry name" value="PRK00292.1-4"/>
    <property type="match status" value="1"/>
</dbReference>
<dbReference type="PANTHER" id="PTHR47690">
    <property type="entry name" value="GLUCOKINASE"/>
    <property type="match status" value="1"/>
</dbReference>
<dbReference type="PANTHER" id="PTHR47690:SF1">
    <property type="entry name" value="GLUCOKINASE"/>
    <property type="match status" value="1"/>
</dbReference>
<dbReference type="Pfam" id="PF02685">
    <property type="entry name" value="Glucokinase"/>
    <property type="match status" value="1"/>
</dbReference>
<dbReference type="SUPFAM" id="SSF53067">
    <property type="entry name" value="Actin-like ATPase domain"/>
    <property type="match status" value="1"/>
</dbReference>
<keyword id="KW-0067">ATP-binding</keyword>
<keyword id="KW-0963">Cytoplasm</keyword>
<keyword id="KW-0324">Glycolysis</keyword>
<keyword id="KW-0418">Kinase</keyword>
<keyword id="KW-0547">Nucleotide-binding</keyword>
<keyword id="KW-1185">Reference proteome</keyword>
<keyword id="KW-0808">Transferase</keyword>
<accession>Q92T27</accession>
<proteinExistence type="inferred from homology"/>
<protein>
    <recommendedName>
        <fullName evidence="1">Glucokinase</fullName>
        <ecNumber evidence="1">2.7.1.2</ecNumber>
    </recommendedName>
    <alternativeName>
        <fullName evidence="1">Glucose kinase</fullName>
    </alternativeName>
</protein>
<gene>
    <name evidence="1" type="primary">glk</name>
    <name type="ordered locus">R00159</name>
    <name type="ORF">SMc02835</name>
</gene>